<name>IOVO_LOPSP</name>
<accession>P68153</accession>
<accession>P05576</accession>
<proteinExistence type="evidence at protein level"/>
<evidence type="ECO:0000255" key="1">
    <source>
        <dbReference type="PROSITE-ProRule" id="PRU00798"/>
    </source>
</evidence>
<dbReference type="PIR" id="B31439">
    <property type="entry name" value="B31439"/>
</dbReference>
<dbReference type="SMR" id="P68153"/>
<dbReference type="GO" id="GO:0005576">
    <property type="term" value="C:extracellular region"/>
    <property type="evidence" value="ECO:0007669"/>
    <property type="project" value="UniProtKB-SubCell"/>
</dbReference>
<dbReference type="GO" id="GO:0004867">
    <property type="term" value="F:serine-type endopeptidase inhibitor activity"/>
    <property type="evidence" value="ECO:0007669"/>
    <property type="project" value="UniProtKB-KW"/>
</dbReference>
<dbReference type="CDD" id="cd00104">
    <property type="entry name" value="KAZAL_FS"/>
    <property type="match status" value="1"/>
</dbReference>
<dbReference type="FunFam" id="3.30.60.30:FF:000037">
    <property type="entry name" value="Ovomucoid"/>
    <property type="match status" value="1"/>
</dbReference>
<dbReference type="Gene3D" id="3.30.60.30">
    <property type="match status" value="1"/>
</dbReference>
<dbReference type="InterPro" id="IPR051597">
    <property type="entry name" value="Bifunctional_prot_inhibitor"/>
</dbReference>
<dbReference type="InterPro" id="IPR002350">
    <property type="entry name" value="Kazal_dom"/>
</dbReference>
<dbReference type="InterPro" id="IPR036058">
    <property type="entry name" value="Kazal_dom_sf"/>
</dbReference>
<dbReference type="InterPro" id="IPR001239">
    <property type="entry name" value="Prot_inh_Kazal-m"/>
</dbReference>
<dbReference type="PANTHER" id="PTHR47729:SF1">
    <property type="entry name" value="OVOMUCOID-LIKE-RELATED"/>
    <property type="match status" value="1"/>
</dbReference>
<dbReference type="PANTHER" id="PTHR47729">
    <property type="entry name" value="SERINE PEPTIDASE INHIBITOR, KAZAL TYPE 2, TANDEM DUPLICATE 1-RELATED"/>
    <property type="match status" value="1"/>
</dbReference>
<dbReference type="Pfam" id="PF00050">
    <property type="entry name" value="Kazal_1"/>
    <property type="match status" value="1"/>
</dbReference>
<dbReference type="PRINTS" id="PR00290">
    <property type="entry name" value="KAZALINHBTR"/>
</dbReference>
<dbReference type="SMART" id="SM00280">
    <property type="entry name" value="KAZAL"/>
    <property type="match status" value="1"/>
</dbReference>
<dbReference type="SUPFAM" id="SSF100895">
    <property type="entry name" value="Kazal-type serine protease inhibitors"/>
    <property type="match status" value="1"/>
</dbReference>
<dbReference type="PROSITE" id="PS00282">
    <property type="entry name" value="KAZAL_1"/>
    <property type="match status" value="1"/>
</dbReference>
<dbReference type="PROSITE" id="PS51465">
    <property type="entry name" value="KAZAL_2"/>
    <property type="match status" value="1"/>
</dbReference>
<organism>
    <name type="scientific">Lophonetta specularioides</name>
    <name type="common">Crested duck</name>
    <name type="synonym">Anas specularioides</name>
    <dbReference type="NCBI Taxonomy" id="75873"/>
    <lineage>
        <taxon>Eukaryota</taxon>
        <taxon>Metazoa</taxon>
        <taxon>Chordata</taxon>
        <taxon>Craniata</taxon>
        <taxon>Vertebrata</taxon>
        <taxon>Euteleostomi</taxon>
        <taxon>Archelosauria</taxon>
        <taxon>Archosauria</taxon>
        <taxon>Dinosauria</taxon>
        <taxon>Saurischia</taxon>
        <taxon>Theropoda</taxon>
        <taxon>Coelurosauria</taxon>
        <taxon>Aves</taxon>
        <taxon>Neognathae</taxon>
        <taxon>Galloanserae</taxon>
        <taxon>Anseriformes</taxon>
        <taxon>Anatidae</taxon>
        <taxon>Anatinae</taxon>
        <taxon>Lophonetta</taxon>
    </lineage>
</organism>
<reference key="1">
    <citation type="journal article" date="1987" name="Biochemistry">
        <title>Ovomucoid third domains from 100 avian species: isolation, sequences, and hypervariability of enzyme-inhibitor contact residues.</title>
        <authorList>
            <person name="Laskowski M. Jr."/>
            <person name="Kato I."/>
            <person name="Ardelt W."/>
            <person name="Cook J."/>
            <person name="Denton A."/>
            <person name="Empie M.W."/>
            <person name="Kohr W.J."/>
            <person name="Park S.J."/>
            <person name="Parks K."/>
            <person name="Schatzley B.L."/>
            <person name="Schoenberger O.L."/>
            <person name="Tashiro M."/>
            <person name="Vichot G."/>
            <person name="Whatley H.E."/>
            <person name="Wieczorek A."/>
            <person name="Wieczorek M."/>
        </authorList>
    </citation>
    <scope>PROTEIN SEQUENCE</scope>
</reference>
<protein>
    <recommendedName>
        <fullName>Ovomucoid</fullName>
    </recommendedName>
</protein>
<sequence length="54" mass="5758">VATVDCSGYPKPACTMEYMPLCGSDNKTYGNKCNFCNAVVDSNGTLTLSHFGEC</sequence>
<keyword id="KW-0903">Direct protein sequencing</keyword>
<keyword id="KW-1015">Disulfide bond</keyword>
<keyword id="KW-0325">Glycoprotein</keyword>
<keyword id="KW-0646">Protease inhibitor</keyword>
<keyword id="KW-0677">Repeat</keyword>
<keyword id="KW-0964">Secreted</keyword>
<keyword id="KW-0722">Serine protease inhibitor</keyword>
<feature type="chain" id="PRO_0000073139" description="Ovomucoid">
    <location>
        <begin position="1" status="less than"/>
        <end position="54" status="greater than"/>
    </location>
</feature>
<feature type="domain" description="Kazal-like" evidence="1">
    <location>
        <begin position="4"/>
        <end position="54"/>
    </location>
</feature>
<feature type="site" description="Reactive bond 3">
    <location>
        <begin position="16"/>
        <end position="17"/>
    </location>
</feature>
<feature type="glycosylation site" description="N-linked (GlcNAc...) asparagine">
    <location>
        <position position="43"/>
    </location>
</feature>
<feature type="disulfide bond">
    <location>
        <begin position="6"/>
        <end position="36"/>
    </location>
</feature>
<feature type="disulfide bond">
    <location>
        <begin position="14"/>
        <end position="33"/>
    </location>
</feature>
<feature type="disulfide bond">
    <location>
        <begin position="22"/>
        <end position="54"/>
    </location>
</feature>
<feature type="non-terminal residue">
    <location>
        <position position="1"/>
    </location>
</feature>
<feature type="non-terminal residue">
    <location>
        <position position="54"/>
    </location>
</feature>
<comment type="subcellular location">
    <subcellularLocation>
        <location>Secreted</location>
    </subcellularLocation>
</comment>
<comment type="domain">
    <text>Avian ovomucoid consists of three homologous, tandem Kazal family inhibitory domains.</text>
</comment>